<sequence>MVSLKTGILGGTFDPIHTGHLILADEVKNRLGLDEVIFIPTGQPYYKADKTISPAEDRLNMVKLAISDKPYFRVMDIEIKRSGPTYTADTLNDLKTILPEKTELYFMLGWDNLEALPRWHKASEIIRLCRLVAAPRIGQVKPDVDELDDKLPGLQQSLILLSKPEVDISSSLVRERVENGQGVEHLVPAAVASYIKKHNLYCRK</sequence>
<accession>A5FP50</accession>
<evidence type="ECO:0000255" key="1">
    <source>
        <dbReference type="HAMAP-Rule" id="MF_00244"/>
    </source>
</evidence>
<proteinExistence type="inferred from homology"/>
<keyword id="KW-0067">ATP-binding</keyword>
<keyword id="KW-0520">NAD</keyword>
<keyword id="KW-0547">Nucleotide-binding</keyword>
<keyword id="KW-0548">Nucleotidyltransferase</keyword>
<keyword id="KW-0662">Pyridine nucleotide biosynthesis</keyword>
<keyword id="KW-0808">Transferase</keyword>
<comment type="function">
    <text evidence="1">Catalyzes the reversible adenylation of nicotinate mononucleotide (NaMN) to nicotinic acid adenine dinucleotide (NaAD).</text>
</comment>
<comment type="catalytic activity">
    <reaction evidence="1">
        <text>nicotinate beta-D-ribonucleotide + ATP + H(+) = deamido-NAD(+) + diphosphate</text>
        <dbReference type="Rhea" id="RHEA:22860"/>
        <dbReference type="ChEBI" id="CHEBI:15378"/>
        <dbReference type="ChEBI" id="CHEBI:30616"/>
        <dbReference type="ChEBI" id="CHEBI:33019"/>
        <dbReference type="ChEBI" id="CHEBI:57502"/>
        <dbReference type="ChEBI" id="CHEBI:58437"/>
        <dbReference type="EC" id="2.7.7.18"/>
    </reaction>
</comment>
<comment type="pathway">
    <text evidence="1">Cofactor biosynthesis; NAD(+) biosynthesis; deamido-NAD(+) from nicotinate D-ribonucleotide: step 1/1.</text>
</comment>
<comment type="similarity">
    <text evidence="1">Belongs to the NadD family.</text>
</comment>
<organism>
    <name type="scientific">Dehalococcoides mccartyi (strain ATCC BAA-2100 / JCM 16839 / KCTC 5957 / BAV1)</name>
    <dbReference type="NCBI Taxonomy" id="216389"/>
    <lineage>
        <taxon>Bacteria</taxon>
        <taxon>Bacillati</taxon>
        <taxon>Chloroflexota</taxon>
        <taxon>Dehalococcoidia</taxon>
        <taxon>Dehalococcoidales</taxon>
        <taxon>Dehalococcoidaceae</taxon>
        <taxon>Dehalococcoides</taxon>
    </lineage>
</organism>
<feature type="chain" id="PRO_1000078379" description="Probable nicotinate-nucleotide adenylyltransferase">
    <location>
        <begin position="1"/>
        <end position="204"/>
    </location>
</feature>
<gene>
    <name evidence="1" type="primary">nadD</name>
    <name type="ordered locus">DehaBAV1_0003</name>
</gene>
<dbReference type="EC" id="2.7.7.18" evidence="1"/>
<dbReference type="EMBL" id="CP000688">
    <property type="protein sequence ID" value="ABQ16595.1"/>
    <property type="molecule type" value="Genomic_DNA"/>
</dbReference>
<dbReference type="SMR" id="A5FP50"/>
<dbReference type="KEGG" id="deb:DehaBAV1_0003"/>
<dbReference type="PATRIC" id="fig|216389.18.peg.3"/>
<dbReference type="HOGENOM" id="CLU_069765_1_1_0"/>
<dbReference type="UniPathway" id="UPA00253">
    <property type="reaction ID" value="UER00332"/>
</dbReference>
<dbReference type="GO" id="GO:0005524">
    <property type="term" value="F:ATP binding"/>
    <property type="evidence" value="ECO:0007669"/>
    <property type="project" value="UniProtKB-KW"/>
</dbReference>
<dbReference type="GO" id="GO:0004515">
    <property type="term" value="F:nicotinate-nucleotide adenylyltransferase activity"/>
    <property type="evidence" value="ECO:0007669"/>
    <property type="project" value="UniProtKB-UniRule"/>
</dbReference>
<dbReference type="GO" id="GO:0009435">
    <property type="term" value="P:NAD biosynthetic process"/>
    <property type="evidence" value="ECO:0007669"/>
    <property type="project" value="UniProtKB-UniRule"/>
</dbReference>
<dbReference type="CDD" id="cd02165">
    <property type="entry name" value="NMNAT"/>
    <property type="match status" value="1"/>
</dbReference>
<dbReference type="Gene3D" id="3.40.50.620">
    <property type="entry name" value="HUPs"/>
    <property type="match status" value="1"/>
</dbReference>
<dbReference type="HAMAP" id="MF_00244">
    <property type="entry name" value="NaMN_adenylyltr"/>
    <property type="match status" value="1"/>
</dbReference>
<dbReference type="InterPro" id="IPR004821">
    <property type="entry name" value="Cyt_trans-like"/>
</dbReference>
<dbReference type="InterPro" id="IPR005248">
    <property type="entry name" value="NadD/NMNAT"/>
</dbReference>
<dbReference type="InterPro" id="IPR014729">
    <property type="entry name" value="Rossmann-like_a/b/a_fold"/>
</dbReference>
<dbReference type="NCBIfam" id="TIGR00125">
    <property type="entry name" value="cyt_tran_rel"/>
    <property type="match status" value="1"/>
</dbReference>
<dbReference type="NCBIfam" id="TIGR00482">
    <property type="entry name" value="nicotinate (nicotinamide) nucleotide adenylyltransferase"/>
    <property type="match status" value="1"/>
</dbReference>
<dbReference type="NCBIfam" id="NF000840">
    <property type="entry name" value="PRK00071.1-3"/>
    <property type="match status" value="1"/>
</dbReference>
<dbReference type="PANTHER" id="PTHR39321">
    <property type="entry name" value="NICOTINATE-NUCLEOTIDE ADENYLYLTRANSFERASE-RELATED"/>
    <property type="match status" value="1"/>
</dbReference>
<dbReference type="PANTHER" id="PTHR39321:SF3">
    <property type="entry name" value="PHOSPHOPANTETHEINE ADENYLYLTRANSFERASE"/>
    <property type="match status" value="1"/>
</dbReference>
<dbReference type="Pfam" id="PF01467">
    <property type="entry name" value="CTP_transf_like"/>
    <property type="match status" value="1"/>
</dbReference>
<dbReference type="SUPFAM" id="SSF52374">
    <property type="entry name" value="Nucleotidylyl transferase"/>
    <property type="match status" value="1"/>
</dbReference>
<reference key="1">
    <citation type="submission" date="2007-05" db="EMBL/GenBank/DDBJ databases">
        <title>Complete sequence of Dehalococcoides sp. BAV1.</title>
        <authorList>
            <consortium name="US DOE Joint Genome Institute"/>
            <person name="Copeland A."/>
            <person name="Lucas S."/>
            <person name="Lapidus A."/>
            <person name="Barry K."/>
            <person name="Detter J.C."/>
            <person name="Glavina del Rio T."/>
            <person name="Hammon N."/>
            <person name="Israni S."/>
            <person name="Pitluck S."/>
            <person name="Lowry S."/>
            <person name="Clum A."/>
            <person name="Schmutz J."/>
            <person name="Larimer F."/>
            <person name="Land M."/>
            <person name="Hauser L."/>
            <person name="Kyrpides N."/>
            <person name="Kim E."/>
            <person name="Ritalahti K.M."/>
            <person name="Loeffler F."/>
            <person name="Richardson P."/>
        </authorList>
    </citation>
    <scope>NUCLEOTIDE SEQUENCE [LARGE SCALE GENOMIC DNA]</scope>
    <source>
        <strain>ATCC BAA-2100 / JCM 16839 / KCTC 5957 / BAV1</strain>
    </source>
</reference>
<name>NADD_DEHMB</name>
<protein>
    <recommendedName>
        <fullName evidence="1">Probable nicotinate-nucleotide adenylyltransferase</fullName>
        <ecNumber evidence="1">2.7.7.18</ecNumber>
    </recommendedName>
    <alternativeName>
        <fullName evidence="1">Deamido-NAD(+) diphosphorylase</fullName>
    </alternativeName>
    <alternativeName>
        <fullName evidence="1">Deamido-NAD(+) pyrophosphorylase</fullName>
    </alternativeName>
    <alternativeName>
        <fullName evidence="1">Nicotinate mononucleotide adenylyltransferase</fullName>
        <shortName evidence="1">NaMN adenylyltransferase</shortName>
    </alternativeName>
</protein>